<sequence length="327" mass="37754">MNIISDKEILEVRTSQVFRFSVYFIDTSCIISMAVTVLAIFQLHSKQVFNPSTTRLLITDLVFINIHNLSYIFLQNWSLFRSFFYQTANDIMFKSEECWPHHVTNEFTKVVTVFNQFALIINRISVTIDSKRFSHANYGFLLAILSLIASTVFTAQQHFLGPIHGMRTTSCFRESDVVLDLKTEHIIPYLAICLTSIVCSLLLIIYVKKTQKTKTYDIESEYTKKEAVVSSISVAILGIIQLVLFCFYDTFLTIFAKLTAENPNVHDTNIIGWFYTSPLNAIISPTAVFLYISWIKKNRQMHIRKMTKVNKSENGCHFQQLSVMWNK</sequence>
<name>SRA33_CAEEL</name>
<feature type="chain" id="PRO_0000104493" description="Serpentine receptor class alpha-33">
    <location>
        <begin position="1"/>
        <end position="327"/>
    </location>
</feature>
<feature type="transmembrane region" description="Helical" evidence="1">
    <location>
        <begin position="20"/>
        <end position="40"/>
    </location>
</feature>
<feature type="transmembrane region" description="Helical" evidence="1">
    <location>
        <begin position="56"/>
        <end position="76"/>
    </location>
</feature>
<feature type="transmembrane region" description="Helical" evidence="1">
    <location>
        <begin position="133"/>
        <end position="153"/>
    </location>
</feature>
<feature type="transmembrane region" description="Helical" evidence="1">
    <location>
        <begin position="186"/>
        <end position="206"/>
    </location>
</feature>
<feature type="transmembrane region" description="Helical" evidence="1">
    <location>
        <begin position="227"/>
        <end position="247"/>
    </location>
</feature>
<feature type="transmembrane region" description="Helical" evidence="1">
    <location>
        <begin position="270"/>
        <end position="290"/>
    </location>
</feature>
<keyword id="KW-0472">Membrane</keyword>
<keyword id="KW-1185">Reference proteome</keyword>
<keyword id="KW-0812">Transmembrane</keyword>
<keyword id="KW-1133">Transmembrane helix</keyword>
<gene>
    <name type="primary">sra-33</name>
    <name type="ORF">B0304.6</name>
</gene>
<comment type="subcellular location">
    <subcellularLocation>
        <location evidence="2">Membrane</location>
        <topology evidence="2">Multi-pass membrane protein</topology>
    </subcellularLocation>
</comment>
<comment type="similarity">
    <text evidence="2">Belongs to the nematode receptor-like protein sra family.</text>
</comment>
<proteinExistence type="inferred from homology"/>
<dbReference type="EMBL" id="FO080166">
    <property type="protein sequence ID" value="CCD61738.1"/>
    <property type="molecule type" value="Genomic_DNA"/>
</dbReference>
<dbReference type="PIR" id="T15323">
    <property type="entry name" value="T15323"/>
</dbReference>
<dbReference type="RefSeq" id="NP_494802.3">
    <property type="nucleotide sequence ID" value="NM_062401.5"/>
</dbReference>
<dbReference type="SMR" id="Q10935"/>
<dbReference type="FunCoup" id="Q10935">
    <property type="interactions" value="2"/>
</dbReference>
<dbReference type="STRING" id="6239.B0304.6.1"/>
<dbReference type="PaxDb" id="6239-B0304.6"/>
<dbReference type="EnsemblMetazoa" id="B0304.6.1">
    <property type="protein sequence ID" value="B0304.6.1"/>
    <property type="gene ID" value="WBGene00005059"/>
</dbReference>
<dbReference type="GeneID" id="181920"/>
<dbReference type="KEGG" id="cel:CELE_B0304.6"/>
<dbReference type="UCSC" id="B0304.6">
    <property type="organism name" value="c. elegans"/>
</dbReference>
<dbReference type="AGR" id="WB:WBGene00005059"/>
<dbReference type="CTD" id="181920"/>
<dbReference type="WormBase" id="B0304.6">
    <property type="protein sequence ID" value="CE34634"/>
    <property type="gene ID" value="WBGene00005059"/>
    <property type="gene designation" value="sra-33"/>
</dbReference>
<dbReference type="eggNOG" id="ENOG502TH82">
    <property type="taxonomic scope" value="Eukaryota"/>
</dbReference>
<dbReference type="GeneTree" id="ENSGT00970000195848"/>
<dbReference type="HOGENOM" id="CLU_048025_1_0_1"/>
<dbReference type="InParanoid" id="Q10935"/>
<dbReference type="OMA" id="FKSEECW"/>
<dbReference type="OrthoDB" id="5840799at2759"/>
<dbReference type="PhylomeDB" id="Q10935"/>
<dbReference type="PRO" id="PR:Q10935"/>
<dbReference type="Proteomes" id="UP000001940">
    <property type="component" value="Chromosome II"/>
</dbReference>
<dbReference type="Bgee" id="WBGene00005059">
    <property type="expression patterns" value="Expressed in embryo and 1 other cell type or tissue"/>
</dbReference>
<dbReference type="GO" id="GO:0016020">
    <property type="term" value="C:membrane"/>
    <property type="evidence" value="ECO:0007669"/>
    <property type="project" value="UniProtKB-SubCell"/>
</dbReference>
<dbReference type="GO" id="GO:0004930">
    <property type="term" value="F:G protein-coupled receptor activity"/>
    <property type="evidence" value="ECO:0007669"/>
    <property type="project" value="InterPro"/>
</dbReference>
<dbReference type="GO" id="GO:0004984">
    <property type="term" value="F:olfactory receptor activity"/>
    <property type="evidence" value="ECO:0000318"/>
    <property type="project" value="GO_Central"/>
</dbReference>
<dbReference type="GO" id="GO:0050907">
    <property type="term" value="P:detection of chemical stimulus involved in sensory perception"/>
    <property type="evidence" value="ECO:0000318"/>
    <property type="project" value="GO_Central"/>
</dbReference>
<dbReference type="InterPro" id="IPR000344">
    <property type="entry name" value="7TM_GPCR_serpentine_rcpt_Sra"/>
</dbReference>
<dbReference type="InterPro" id="IPR051080">
    <property type="entry name" value="Nematode_rcpt-like_serp_alpha"/>
</dbReference>
<dbReference type="PANTHER" id="PTHR31357">
    <property type="entry name" value="SERPENTINE RECEPTOR CLASS ALPHA-10"/>
    <property type="match status" value="1"/>
</dbReference>
<dbReference type="PANTHER" id="PTHR31357:SF3">
    <property type="entry name" value="SERPENTINE RECEPTOR CLASS ALPHA-33"/>
    <property type="match status" value="1"/>
</dbReference>
<dbReference type="Pfam" id="PF02117">
    <property type="entry name" value="7TM_GPCR_Sra"/>
    <property type="match status" value="1"/>
</dbReference>
<dbReference type="PRINTS" id="PR00697">
    <property type="entry name" value="TMPROTEINSRA"/>
</dbReference>
<evidence type="ECO:0000255" key="1"/>
<evidence type="ECO:0000305" key="2"/>
<organism>
    <name type="scientific">Caenorhabditis elegans</name>
    <dbReference type="NCBI Taxonomy" id="6239"/>
    <lineage>
        <taxon>Eukaryota</taxon>
        <taxon>Metazoa</taxon>
        <taxon>Ecdysozoa</taxon>
        <taxon>Nematoda</taxon>
        <taxon>Chromadorea</taxon>
        <taxon>Rhabditida</taxon>
        <taxon>Rhabditina</taxon>
        <taxon>Rhabditomorpha</taxon>
        <taxon>Rhabditoidea</taxon>
        <taxon>Rhabditidae</taxon>
        <taxon>Peloderinae</taxon>
        <taxon>Caenorhabditis</taxon>
    </lineage>
</organism>
<accession>Q10935</accession>
<protein>
    <recommendedName>
        <fullName>Serpentine receptor class alpha-33</fullName>
        <shortName>Protein sra-33</shortName>
    </recommendedName>
</protein>
<reference key="1">
    <citation type="journal article" date="1998" name="Science">
        <title>Genome sequence of the nematode C. elegans: a platform for investigating biology.</title>
        <authorList>
            <consortium name="The C. elegans sequencing consortium"/>
        </authorList>
    </citation>
    <scope>NUCLEOTIDE SEQUENCE [LARGE SCALE GENOMIC DNA]</scope>
    <source>
        <strain>Bristol N2</strain>
    </source>
</reference>